<organism>
    <name type="scientific">Mycobacterium marinum (strain ATCC BAA-535 / M)</name>
    <dbReference type="NCBI Taxonomy" id="216594"/>
    <lineage>
        <taxon>Bacteria</taxon>
        <taxon>Bacillati</taxon>
        <taxon>Actinomycetota</taxon>
        <taxon>Actinomycetes</taxon>
        <taxon>Mycobacteriales</taxon>
        <taxon>Mycobacteriaceae</taxon>
        <taxon>Mycobacterium</taxon>
        <taxon>Mycobacterium ulcerans group</taxon>
    </lineage>
</organism>
<accession>B2HCT6</accession>
<reference key="1">
    <citation type="journal article" date="2008" name="Genome Res.">
        <title>Insights from the complete genome sequence of Mycobacterium marinum on the evolution of Mycobacterium tuberculosis.</title>
        <authorList>
            <person name="Stinear T.P."/>
            <person name="Seemann T."/>
            <person name="Harrison P.F."/>
            <person name="Jenkin G.A."/>
            <person name="Davies J.K."/>
            <person name="Johnson P.D."/>
            <person name="Abdellah Z."/>
            <person name="Arrowsmith C."/>
            <person name="Chillingworth T."/>
            <person name="Churcher C."/>
            <person name="Clarke K."/>
            <person name="Cronin A."/>
            <person name="Davis P."/>
            <person name="Goodhead I."/>
            <person name="Holroyd N."/>
            <person name="Jagels K."/>
            <person name="Lord A."/>
            <person name="Moule S."/>
            <person name="Mungall K."/>
            <person name="Norbertczak H."/>
            <person name="Quail M.A."/>
            <person name="Rabbinowitsch E."/>
            <person name="Walker D."/>
            <person name="White B."/>
            <person name="Whitehead S."/>
            <person name="Small P.L."/>
            <person name="Brosch R."/>
            <person name="Ramakrishnan L."/>
            <person name="Fischbach M.A."/>
            <person name="Parkhill J."/>
            <person name="Cole S.T."/>
        </authorList>
    </citation>
    <scope>NUCLEOTIDE SEQUENCE [LARGE SCALE GENOMIC DNA]</scope>
    <source>
        <strain>ATCC BAA-535 / M</strain>
    </source>
</reference>
<protein>
    <recommendedName>
        <fullName evidence="1">Large ribosomal subunit protein uL6</fullName>
    </recommendedName>
    <alternativeName>
        <fullName evidence="2">50S ribosomal protein L6</fullName>
    </alternativeName>
</protein>
<proteinExistence type="inferred from homology"/>
<keyword id="KW-1185">Reference proteome</keyword>
<keyword id="KW-0687">Ribonucleoprotein</keyword>
<keyword id="KW-0689">Ribosomal protein</keyword>
<keyword id="KW-0694">RNA-binding</keyword>
<keyword id="KW-0699">rRNA-binding</keyword>
<dbReference type="EMBL" id="CP000854">
    <property type="protein sequence ID" value="ACC39508.1"/>
    <property type="molecule type" value="Genomic_DNA"/>
</dbReference>
<dbReference type="RefSeq" id="WP_011739074.1">
    <property type="nucleotide sequence ID" value="NC_010612.1"/>
</dbReference>
<dbReference type="SMR" id="B2HCT6"/>
<dbReference type="STRING" id="216594.MMAR_1050"/>
<dbReference type="GeneID" id="34339021"/>
<dbReference type="KEGG" id="mmi:MMAR_1050"/>
<dbReference type="eggNOG" id="COG0097">
    <property type="taxonomic scope" value="Bacteria"/>
</dbReference>
<dbReference type="HOGENOM" id="CLU_065464_1_2_11"/>
<dbReference type="OrthoDB" id="9805007at2"/>
<dbReference type="Proteomes" id="UP000001190">
    <property type="component" value="Chromosome"/>
</dbReference>
<dbReference type="GO" id="GO:0022625">
    <property type="term" value="C:cytosolic large ribosomal subunit"/>
    <property type="evidence" value="ECO:0007669"/>
    <property type="project" value="TreeGrafter"/>
</dbReference>
<dbReference type="GO" id="GO:0019843">
    <property type="term" value="F:rRNA binding"/>
    <property type="evidence" value="ECO:0007669"/>
    <property type="project" value="UniProtKB-UniRule"/>
</dbReference>
<dbReference type="GO" id="GO:0003735">
    <property type="term" value="F:structural constituent of ribosome"/>
    <property type="evidence" value="ECO:0007669"/>
    <property type="project" value="InterPro"/>
</dbReference>
<dbReference type="GO" id="GO:0002181">
    <property type="term" value="P:cytoplasmic translation"/>
    <property type="evidence" value="ECO:0007669"/>
    <property type="project" value="TreeGrafter"/>
</dbReference>
<dbReference type="FunFam" id="3.90.930.12:FF:000001">
    <property type="entry name" value="50S ribosomal protein L6"/>
    <property type="match status" value="1"/>
</dbReference>
<dbReference type="FunFam" id="3.90.930.12:FF:000002">
    <property type="entry name" value="50S ribosomal protein L6"/>
    <property type="match status" value="1"/>
</dbReference>
<dbReference type="Gene3D" id="3.90.930.12">
    <property type="entry name" value="Ribosomal protein L6, alpha-beta domain"/>
    <property type="match status" value="2"/>
</dbReference>
<dbReference type="HAMAP" id="MF_01365_B">
    <property type="entry name" value="Ribosomal_uL6_B"/>
    <property type="match status" value="1"/>
</dbReference>
<dbReference type="InterPro" id="IPR000702">
    <property type="entry name" value="Ribosomal_uL6-like"/>
</dbReference>
<dbReference type="InterPro" id="IPR036789">
    <property type="entry name" value="Ribosomal_uL6-like_a/b-dom_sf"/>
</dbReference>
<dbReference type="InterPro" id="IPR020040">
    <property type="entry name" value="Ribosomal_uL6_a/b-dom"/>
</dbReference>
<dbReference type="InterPro" id="IPR019906">
    <property type="entry name" value="Ribosomal_uL6_bac-type"/>
</dbReference>
<dbReference type="InterPro" id="IPR002358">
    <property type="entry name" value="Ribosomal_uL6_CS"/>
</dbReference>
<dbReference type="NCBIfam" id="TIGR03654">
    <property type="entry name" value="L6_bact"/>
    <property type="match status" value="1"/>
</dbReference>
<dbReference type="PANTHER" id="PTHR11655">
    <property type="entry name" value="60S/50S RIBOSOMAL PROTEIN L6/L9"/>
    <property type="match status" value="1"/>
</dbReference>
<dbReference type="PANTHER" id="PTHR11655:SF14">
    <property type="entry name" value="LARGE RIBOSOMAL SUBUNIT PROTEIN UL6M"/>
    <property type="match status" value="1"/>
</dbReference>
<dbReference type="Pfam" id="PF00347">
    <property type="entry name" value="Ribosomal_L6"/>
    <property type="match status" value="2"/>
</dbReference>
<dbReference type="PIRSF" id="PIRSF002162">
    <property type="entry name" value="Ribosomal_L6"/>
    <property type="match status" value="1"/>
</dbReference>
<dbReference type="PRINTS" id="PR00059">
    <property type="entry name" value="RIBOSOMALL6"/>
</dbReference>
<dbReference type="SUPFAM" id="SSF56053">
    <property type="entry name" value="Ribosomal protein L6"/>
    <property type="match status" value="2"/>
</dbReference>
<dbReference type="PROSITE" id="PS00525">
    <property type="entry name" value="RIBOSOMAL_L6_1"/>
    <property type="match status" value="1"/>
</dbReference>
<sequence length="179" mass="19457">MSRIGKQPVPVPTGVDVMIEGQKVSVKGPKGALDLTVAEPITVSRNDDGAIVISRPNDERRNRSLHGLSRTLVSNLVTGVTEGYTTKMEIHGVGYRVQLKGANLEFALGYSHPVVIEAPEGITFAVQAPTKFTVSGIDKQKVGQISANIRRLRRPDPYKGKGVRYEGEQIRRKVGKTGK</sequence>
<name>RL6_MYCMM</name>
<evidence type="ECO:0000255" key="1">
    <source>
        <dbReference type="HAMAP-Rule" id="MF_01365"/>
    </source>
</evidence>
<evidence type="ECO:0000305" key="2"/>
<comment type="function">
    <text evidence="1">This protein binds to the 23S rRNA, and is important in its secondary structure. It is located near the subunit interface in the base of the L7/L12 stalk, and near the tRNA binding site of the peptidyltransferase center.</text>
</comment>
<comment type="subunit">
    <text evidence="1">Part of the 50S ribosomal subunit.</text>
</comment>
<comment type="similarity">
    <text evidence="1">Belongs to the universal ribosomal protein uL6 family.</text>
</comment>
<feature type="chain" id="PRO_1000144020" description="Large ribosomal subunit protein uL6">
    <location>
        <begin position="1"/>
        <end position="179"/>
    </location>
</feature>
<gene>
    <name evidence="1" type="primary">rplF</name>
    <name type="ordered locus">MMAR_1050</name>
</gene>